<feature type="chain" id="PRO_0000335385" description="Ribosomal RNA small subunit methyltransferase G">
    <location>
        <begin position="1"/>
        <end position="214"/>
    </location>
</feature>
<feature type="binding site" evidence="1">
    <location>
        <position position="77"/>
    </location>
    <ligand>
        <name>S-adenosyl-L-methionine</name>
        <dbReference type="ChEBI" id="CHEBI:59789"/>
    </ligand>
</feature>
<feature type="binding site" evidence="1">
    <location>
        <position position="82"/>
    </location>
    <ligand>
        <name>S-adenosyl-L-methionine</name>
        <dbReference type="ChEBI" id="CHEBI:59789"/>
    </ligand>
</feature>
<feature type="binding site" evidence="1">
    <location>
        <begin position="128"/>
        <end position="129"/>
    </location>
    <ligand>
        <name>S-adenosyl-L-methionine</name>
        <dbReference type="ChEBI" id="CHEBI:59789"/>
    </ligand>
</feature>
<feature type="binding site" evidence="1">
    <location>
        <position position="143"/>
    </location>
    <ligand>
        <name>S-adenosyl-L-methionine</name>
        <dbReference type="ChEBI" id="CHEBI:59789"/>
    </ligand>
</feature>
<gene>
    <name evidence="1" type="primary">rsmG</name>
    <name type="ordered locus">Noc_3084</name>
</gene>
<protein>
    <recommendedName>
        <fullName evidence="1">Ribosomal RNA small subunit methyltransferase G</fullName>
        <ecNumber evidence="1">2.1.1.170</ecNumber>
    </recommendedName>
    <alternativeName>
        <fullName evidence="1">16S rRNA 7-methylguanosine methyltransferase</fullName>
        <shortName evidence="1">16S rRNA m7G methyltransferase</shortName>
    </alternativeName>
</protein>
<comment type="function">
    <text evidence="1">Specifically methylates the N7 position of guanine in position 527 of 16S rRNA.</text>
</comment>
<comment type="catalytic activity">
    <reaction evidence="1">
        <text>guanosine(527) in 16S rRNA + S-adenosyl-L-methionine = N(7)-methylguanosine(527) in 16S rRNA + S-adenosyl-L-homocysteine</text>
        <dbReference type="Rhea" id="RHEA:42732"/>
        <dbReference type="Rhea" id="RHEA-COMP:10209"/>
        <dbReference type="Rhea" id="RHEA-COMP:10210"/>
        <dbReference type="ChEBI" id="CHEBI:57856"/>
        <dbReference type="ChEBI" id="CHEBI:59789"/>
        <dbReference type="ChEBI" id="CHEBI:74269"/>
        <dbReference type="ChEBI" id="CHEBI:74480"/>
        <dbReference type="EC" id="2.1.1.170"/>
    </reaction>
</comment>
<comment type="subcellular location">
    <subcellularLocation>
        <location evidence="1">Cytoplasm</location>
    </subcellularLocation>
</comment>
<comment type="similarity">
    <text evidence="1">Belongs to the methyltransferase superfamily. RNA methyltransferase RsmG family.</text>
</comment>
<evidence type="ECO:0000255" key="1">
    <source>
        <dbReference type="HAMAP-Rule" id="MF_00074"/>
    </source>
</evidence>
<proteinExistence type="inferred from homology"/>
<sequence>MDSIGENILEKGLLLLGVELDQSQVKVLLAYLRLLEKWNQHYNLTAIKNSKEMISKHVLDSLSIESYLEGRRILDVGSGAGLPGIPLAIARPGCEFVLLDSNAKKTRFLFQASVELGLPNISVVSERVEVYRPSHLFDTIIARAFAKLVDFVAQAEHLCKPRGCLLAMKGRFPQDELEALPASFEIVKACSLSVPEINAQRHLVKLRPRRAGDH</sequence>
<organism>
    <name type="scientific">Nitrosococcus oceani (strain ATCC 19707 / BCRC 17464 / JCM 30415 / NCIMB 11848 / C-107)</name>
    <dbReference type="NCBI Taxonomy" id="323261"/>
    <lineage>
        <taxon>Bacteria</taxon>
        <taxon>Pseudomonadati</taxon>
        <taxon>Pseudomonadota</taxon>
        <taxon>Gammaproteobacteria</taxon>
        <taxon>Chromatiales</taxon>
        <taxon>Chromatiaceae</taxon>
        <taxon>Nitrosococcus</taxon>
    </lineage>
</organism>
<accession>Q3J6M1</accession>
<reference key="1">
    <citation type="journal article" date="2006" name="Appl. Environ. Microbiol.">
        <title>Complete genome sequence of the marine, chemolithoautotrophic, ammonia-oxidizing bacterium Nitrosococcus oceani ATCC 19707.</title>
        <authorList>
            <person name="Klotz M.G."/>
            <person name="Arp D.J."/>
            <person name="Chain P.S.G."/>
            <person name="El-Sheikh A.F."/>
            <person name="Hauser L.J."/>
            <person name="Hommes N.G."/>
            <person name="Larimer F.W."/>
            <person name="Malfatti S.A."/>
            <person name="Norton J.M."/>
            <person name="Poret-Peterson A.T."/>
            <person name="Vergez L.M."/>
            <person name="Ward B.B."/>
        </authorList>
    </citation>
    <scope>NUCLEOTIDE SEQUENCE [LARGE SCALE GENOMIC DNA]</scope>
    <source>
        <strain>ATCC 19707 / BCRC 17464 / JCM 30415 / NCIMB 11848 / C-107</strain>
    </source>
</reference>
<name>RSMG_NITOC</name>
<dbReference type="EC" id="2.1.1.170" evidence="1"/>
<dbReference type="EMBL" id="CP000127">
    <property type="protein sequence ID" value="ABA59525.1"/>
    <property type="molecule type" value="Genomic_DNA"/>
</dbReference>
<dbReference type="RefSeq" id="WP_002813265.1">
    <property type="nucleotide sequence ID" value="NC_007484.1"/>
</dbReference>
<dbReference type="SMR" id="Q3J6M1"/>
<dbReference type="FunCoup" id="Q3J6M1">
    <property type="interactions" value="487"/>
</dbReference>
<dbReference type="STRING" id="323261.Noc_3084"/>
<dbReference type="KEGG" id="noc:Noc_3084"/>
<dbReference type="eggNOG" id="COG0357">
    <property type="taxonomic scope" value="Bacteria"/>
</dbReference>
<dbReference type="HOGENOM" id="CLU_065341_2_0_6"/>
<dbReference type="InParanoid" id="Q3J6M1"/>
<dbReference type="Proteomes" id="UP000006838">
    <property type="component" value="Chromosome"/>
</dbReference>
<dbReference type="GO" id="GO:0005829">
    <property type="term" value="C:cytosol"/>
    <property type="evidence" value="ECO:0007669"/>
    <property type="project" value="TreeGrafter"/>
</dbReference>
<dbReference type="GO" id="GO:0070043">
    <property type="term" value="F:rRNA (guanine-N7-)-methyltransferase activity"/>
    <property type="evidence" value="ECO:0007669"/>
    <property type="project" value="UniProtKB-UniRule"/>
</dbReference>
<dbReference type="CDD" id="cd02440">
    <property type="entry name" value="AdoMet_MTases"/>
    <property type="match status" value="1"/>
</dbReference>
<dbReference type="Gene3D" id="3.40.50.150">
    <property type="entry name" value="Vaccinia Virus protein VP39"/>
    <property type="match status" value="1"/>
</dbReference>
<dbReference type="HAMAP" id="MF_00074">
    <property type="entry name" value="16SrRNA_methyltr_G"/>
    <property type="match status" value="1"/>
</dbReference>
<dbReference type="InterPro" id="IPR003682">
    <property type="entry name" value="rRNA_ssu_MeTfrase_G"/>
</dbReference>
<dbReference type="InterPro" id="IPR029063">
    <property type="entry name" value="SAM-dependent_MTases_sf"/>
</dbReference>
<dbReference type="NCBIfam" id="TIGR00138">
    <property type="entry name" value="rsmG_gidB"/>
    <property type="match status" value="1"/>
</dbReference>
<dbReference type="PANTHER" id="PTHR31760">
    <property type="entry name" value="S-ADENOSYL-L-METHIONINE-DEPENDENT METHYLTRANSFERASES SUPERFAMILY PROTEIN"/>
    <property type="match status" value="1"/>
</dbReference>
<dbReference type="PANTHER" id="PTHR31760:SF0">
    <property type="entry name" value="S-ADENOSYL-L-METHIONINE-DEPENDENT METHYLTRANSFERASES SUPERFAMILY PROTEIN"/>
    <property type="match status" value="1"/>
</dbReference>
<dbReference type="Pfam" id="PF02527">
    <property type="entry name" value="GidB"/>
    <property type="match status" value="1"/>
</dbReference>
<dbReference type="PIRSF" id="PIRSF003078">
    <property type="entry name" value="GidB"/>
    <property type="match status" value="1"/>
</dbReference>
<dbReference type="SUPFAM" id="SSF53335">
    <property type="entry name" value="S-adenosyl-L-methionine-dependent methyltransferases"/>
    <property type="match status" value="1"/>
</dbReference>
<keyword id="KW-0963">Cytoplasm</keyword>
<keyword id="KW-0489">Methyltransferase</keyword>
<keyword id="KW-1185">Reference proteome</keyword>
<keyword id="KW-0698">rRNA processing</keyword>
<keyword id="KW-0949">S-adenosyl-L-methionine</keyword>
<keyword id="KW-0808">Transferase</keyword>